<name>ADT_DICDI</name>
<organism>
    <name type="scientific">Dictyostelium discoideum</name>
    <name type="common">Social amoeba</name>
    <dbReference type="NCBI Taxonomy" id="44689"/>
    <lineage>
        <taxon>Eukaryota</taxon>
        <taxon>Amoebozoa</taxon>
        <taxon>Evosea</taxon>
        <taxon>Eumycetozoa</taxon>
        <taxon>Dictyostelia</taxon>
        <taxon>Dictyosteliales</taxon>
        <taxon>Dictyosteliaceae</taxon>
        <taxon>Dictyostelium</taxon>
    </lineage>
</organism>
<keyword id="KW-0050">Antiport</keyword>
<keyword id="KW-0903">Direct protein sequencing</keyword>
<keyword id="KW-0472">Membrane</keyword>
<keyword id="KW-0496">Mitochondrion</keyword>
<keyword id="KW-0999">Mitochondrion inner membrane</keyword>
<keyword id="KW-1185">Reference proteome</keyword>
<keyword id="KW-0677">Repeat</keyword>
<keyword id="KW-0812">Transmembrane</keyword>
<keyword id="KW-1133">Transmembrane helix</keyword>
<keyword id="KW-0813">Transport</keyword>
<proteinExistence type="evidence at protein level"/>
<reference key="1">
    <citation type="journal article" date="1999" name="Eur. J. Biochem.">
        <title>The mitochondrial adenine nucleotide translocator from Dictyostelium discoideum. Functional characterization and DNA sequencing.</title>
        <authorList>
            <person name="Bof M."/>
            <person name="Brandolin G."/>
            <person name="Satre M."/>
            <person name="Klein G."/>
        </authorList>
    </citation>
    <scope>NUCLEOTIDE SEQUENCE [GENOMIC DNA / MRNA]</scope>
    <scope>FUNCTION</scope>
    <scope>INDUCTION</scope>
    <source>
        <strain>AX2</strain>
    </source>
</reference>
<reference key="2">
    <citation type="journal article" date="2005" name="Nature">
        <title>The genome of the social amoeba Dictyostelium discoideum.</title>
        <authorList>
            <person name="Eichinger L."/>
            <person name="Pachebat J.A."/>
            <person name="Gloeckner G."/>
            <person name="Rajandream M.A."/>
            <person name="Sucgang R."/>
            <person name="Berriman M."/>
            <person name="Song J."/>
            <person name="Olsen R."/>
            <person name="Szafranski K."/>
            <person name="Xu Q."/>
            <person name="Tunggal B."/>
            <person name="Kummerfeld S."/>
            <person name="Madera M."/>
            <person name="Konfortov B.A."/>
            <person name="Rivero F."/>
            <person name="Bankier A.T."/>
            <person name="Lehmann R."/>
            <person name="Hamlin N."/>
            <person name="Davies R."/>
            <person name="Gaudet P."/>
            <person name="Fey P."/>
            <person name="Pilcher K."/>
            <person name="Chen G."/>
            <person name="Saunders D."/>
            <person name="Sodergren E.J."/>
            <person name="Davis P."/>
            <person name="Kerhornou A."/>
            <person name="Nie X."/>
            <person name="Hall N."/>
            <person name="Anjard C."/>
            <person name="Hemphill L."/>
            <person name="Bason N."/>
            <person name="Farbrother P."/>
            <person name="Desany B."/>
            <person name="Just E."/>
            <person name="Morio T."/>
            <person name="Rost R."/>
            <person name="Churcher C.M."/>
            <person name="Cooper J."/>
            <person name="Haydock S."/>
            <person name="van Driessche N."/>
            <person name="Cronin A."/>
            <person name="Goodhead I."/>
            <person name="Muzny D.M."/>
            <person name="Mourier T."/>
            <person name="Pain A."/>
            <person name="Lu M."/>
            <person name="Harper D."/>
            <person name="Lindsay R."/>
            <person name="Hauser H."/>
            <person name="James K.D."/>
            <person name="Quiles M."/>
            <person name="Madan Babu M."/>
            <person name="Saito T."/>
            <person name="Buchrieser C."/>
            <person name="Wardroper A."/>
            <person name="Felder M."/>
            <person name="Thangavelu M."/>
            <person name="Johnson D."/>
            <person name="Knights A."/>
            <person name="Loulseged H."/>
            <person name="Mungall K.L."/>
            <person name="Oliver K."/>
            <person name="Price C."/>
            <person name="Quail M.A."/>
            <person name="Urushihara H."/>
            <person name="Hernandez J."/>
            <person name="Rabbinowitsch E."/>
            <person name="Steffen D."/>
            <person name="Sanders M."/>
            <person name="Ma J."/>
            <person name="Kohara Y."/>
            <person name="Sharp S."/>
            <person name="Simmonds M.N."/>
            <person name="Spiegler S."/>
            <person name="Tivey A."/>
            <person name="Sugano S."/>
            <person name="White B."/>
            <person name="Walker D."/>
            <person name="Woodward J.R."/>
            <person name="Winckler T."/>
            <person name="Tanaka Y."/>
            <person name="Shaulsky G."/>
            <person name="Schleicher M."/>
            <person name="Weinstock G.M."/>
            <person name="Rosenthal A."/>
            <person name="Cox E.C."/>
            <person name="Chisholm R.L."/>
            <person name="Gibbs R.A."/>
            <person name="Loomis W.F."/>
            <person name="Platzer M."/>
            <person name="Kay R.R."/>
            <person name="Williams J.G."/>
            <person name="Dear P.H."/>
            <person name="Noegel A.A."/>
            <person name="Barrell B.G."/>
            <person name="Kuspa A."/>
        </authorList>
    </citation>
    <scope>NUCLEOTIDE SEQUENCE [LARGE SCALE GENOMIC DNA]</scope>
    <source>
        <strain>AX4</strain>
    </source>
</reference>
<reference key="3">
    <citation type="submission" date="2007-07" db="UniProtKB">
        <authorList>
            <person name="Bienvenut W.V."/>
            <person name="Patel H."/>
            <person name="Brunton V.G."/>
            <person name="Frame M.C."/>
        </authorList>
    </citation>
    <scope>PROTEIN SEQUENCE OF 57-76; 144-154; 191-201 AND 267-282</scope>
    <scope>IDENTIFICATION BY MASS SPECTROMETRY</scope>
</reference>
<reference key="4">
    <citation type="journal article" date="2007" name="Biochimie">
        <title>Mitochondrial carrier family: repertoire and peculiarities of the cellular slime mould Dictyostelium discoideum.</title>
        <authorList>
            <person name="Satre M."/>
            <person name="Mattei S."/>
            <person name="Aubry L."/>
            <person name="Gaudet P."/>
            <person name="Pelosi L."/>
            <person name="Brandolin G."/>
            <person name="Klein G."/>
        </authorList>
    </citation>
    <scope>REVIEW</scope>
</reference>
<comment type="function">
    <text evidence="1 5">ADP:ATP antiporter that mediates import of ADP into the mitochondrial matrix for ATP synthesis, and export of ATP out to fuel the cell (PubMed:10092866). Cycles between the cytoplasmic-open state (c-state) and the matrix-open state (m-state): operates by the alternating access mechanism with a single substrate-binding site intermittently exposed to either the cytosolic (c-state) or matrix (m-state) side of the inner mitochondrial membrane (By similarity).</text>
</comment>
<comment type="catalytic activity">
    <reaction evidence="4">
        <text>ADP(in) + ATP(out) = ADP(out) + ATP(in)</text>
        <dbReference type="Rhea" id="RHEA:34999"/>
        <dbReference type="ChEBI" id="CHEBI:30616"/>
        <dbReference type="ChEBI" id="CHEBI:456216"/>
    </reaction>
    <physiologicalReaction direction="left-to-right" evidence="4">
        <dbReference type="Rhea" id="RHEA:35000"/>
    </physiologicalReaction>
</comment>
<comment type="activity regulation">
    <text evidence="5">The matrix-open state (m-state) is inhibited by the membrane-permeable bongkrekic acid (BKA). The cytoplasmic-open state (c-state) is inhibited by the membrane-impermeable toxic inhibitor carboxyatractyloside (CATR).</text>
</comment>
<comment type="subunit">
    <text evidence="1 2">Monomer.</text>
</comment>
<comment type="subcellular location">
    <subcellularLocation>
        <location evidence="2">Mitochondrion inner membrane</location>
        <topology evidence="2">Multi-pass membrane protein</topology>
    </subcellularLocation>
</comment>
<comment type="domain">
    <text evidence="2">The transmembrane helices are not perpendicular to the plane of the membrane, but cross the membrane at an angle. Odd-numbered transmembrane helices exhibit a sharp kink, due to the presence of a conserved proline residue.</text>
</comment>
<comment type="similarity">
    <text evidence="6">Belongs to the mitochondrial carrier (TC 2.A.29) family.</text>
</comment>
<sequence length="309" mass="33469">MSNQKKNDVSSFVKDSLIGGTAGGVSKTIVAPIERVKLLLQVQSASTQIAADKQYKGIVDCFVRVSKEQGVISLWRGNLANVIRYFPTQALNFAFKDKYKKFFVRHTAKENPTKFFIGNLLSGGAAGATSLLFVYPLDFARTRLAADVGTGSARQFTGLGNCISSIYKRDGLIGLYRGFGVSVGGIFVYRAAFFGGYDTAKGILLGENNKKASFWASWGIAQVVTTIAGVVSYPFDTVRRRMMMQAGRADILYSSTWDCWVKIATREGPTAFFKGALSNAIRGSGGALVLVIYDEIQKLMGFEGGVGSE</sequence>
<gene>
    <name type="primary">ancA</name>
    <name type="ORF">DDB_G0267454</name>
</gene>
<evidence type="ECO:0000250" key="1">
    <source>
        <dbReference type="UniProtKB" id="G2QNH0"/>
    </source>
</evidence>
<evidence type="ECO:0000250" key="2">
    <source>
        <dbReference type="UniProtKB" id="P02722"/>
    </source>
</evidence>
<evidence type="ECO:0000250" key="3">
    <source>
        <dbReference type="UniProtKB" id="P12235"/>
    </source>
</evidence>
<evidence type="ECO:0000250" key="4">
    <source>
        <dbReference type="UniProtKB" id="P48962"/>
    </source>
</evidence>
<evidence type="ECO:0000269" key="5">
    <source>
    </source>
</evidence>
<evidence type="ECO:0000305" key="6"/>
<protein>
    <recommendedName>
        <fullName>Mitochondrial substrate carrier family protein ancA</fullName>
    </recommendedName>
    <alternativeName>
        <fullName>ADP,ATP carrier protein</fullName>
    </alternativeName>
    <alternativeName>
        <fullName>ADP/ATP translocase</fullName>
    </alternativeName>
    <alternativeName>
        <fullName>Adenine nucleotide translocator</fullName>
        <shortName>ANT</shortName>
    </alternativeName>
</protein>
<accession>O97470</accession>
<accession>Q55GL8</accession>
<dbReference type="EMBL" id="AF039211">
    <property type="protein sequence ID" value="AAC77879.1"/>
    <property type="molecule type" value="mRNA"/>
</dbReference>
<dbReference type="EMBL" id="AF100676">
    <property type="protein sequence ID" value="AAC79081.1"/>
    <property type="molecule type" value="Genomic_DNA"/>
</dbReference>
<dbReference type="EMBL" id="AAFI02000003">
    <property type="protein sequence ID" value="EAL73180.1"/>
    <property type="molecule type" value="Genomic_DNA"/>
</dbReference>
<dbReference type="RefSeq" id="XP_647166.1">
    <property type="nucleotide sequence ID" value="XM_642074.1"/>
</dbReference>
<dbReference type="SMR" id="O97470"/>
<dbReference type="FunCoup" id="O97470">
    <property type="interactions" value="372"/>
</dbReference>
<dbReference type="IntAct" id="O97470">
    <property type="interactions" value="1"/>
</dbReference>
<dbReference type="STRING" id="44689.O97470"/>
<dbReference type="GlyGen" id="O97470">
    <property type="glycosylation" value="1 site"/>
</dbReference>
<dbReference type="PaxDb" id="44689-DDB0201558"/>
<dbReference type="EnsemblProtists" id="EAL73180">
    <property type="protein sequence ID" value="EAL73180"/>
    <property type="gene ID" value="DDB_G0267454"/>
</dbReference>
<dbReference type="GeneID" id="8615969"/>
<dbReference type="KEGG" id="ddi:DDB_G0267454"/>
<dbReference type="dictyBase" id="DDB_G0267454">
    <property type="gene designation" value="ancA"/>
</dbReference>
<dbReference type="VEuPathDB" id="AmoebaDB:DDB_G0267454"/>
<dbReference type="eggNOG" id="KOG0749">
    <property type="taxonomic scope" value="Eukaryota"/>
</dbReference>
<dbReference type="HOGENOM" id="CLU_015166_12_0_1"/>
<dbReference type="InParanoid" id="O97470"/>
<dbReference type="OMA" id="NFACKEK"/>
<dbReference type="PhylomeDB" id="O97470"/>
<dbReference type="Reactome" id="R-DDI-1268020">
    <property type="pathway name" value="Mitochondrial protein import"/>
</dbReference>
<dbReference type="Reactome" id="R-DDI-166187">
    <property type="pathway name" value="Mitochondrial Uncoupling"/>
</dbReference>
<dbReference type="Reactome" id="R-DDI-83936">
    <property type="pathway name" value="Transport of nucleosides and free purine and pyrimidine bases across the plasma membrane"/>
</dbReference>
<dbReference type="Reactome" id="R-DDI-9837999">
    <property type="pathway name" value="Mitochondrial protein degradation"/>
</dbReference>
<dbReference type="PRO" id="PR:O97470"/>
<dbReference type="Proteomes" id="UP000002195">
    <property type="component" value="Chromosome 1"/>
</dbReference>
<dbReference type="GO" id="GO:0031012">
    <property type="term" value="C:extracellular matrix"/>
    <property type="evidence" value="ECO:0007005"/>
    <property type="project" value="dictyBase"/>
</dbReference>
<dbReference type="GO" id="GO:0005743">
    <property type="term" value="C:mitochondrial inner membrane"/>
    <property type="evidence" value="ECO:0000250"/>
    <property type="project" value="dictyBase"/>
</dbReference>
<dbReference type="GO" id="GO:0005471">
    <property type="term" value="F:ATP:ADP antiporter activity"/>
    <property type="evidence" value="ECO:0000250"/>
    <property type="project" value="dictyBase"/>
</dbReference>
<dbReference type="GO" id="GO:0015866">
    <property type="term" value="P:ADP transport"/>
    <property type="evidence" value="ECO:0000250"/>
    <property type="project" value="dictyBase"/>
</dbReference>
<dbReference type="GO" id="GO:0015867">
    <property type="term" value="P:ATP transport"/>
    <property type="evidence" value="ECO:0000250"/>
    <property type="project" value="dictyBase"/>
</dbReference>
<dbReference type="GO" id="GO:0140021">
    <property type="term" value="P:mitochondrial ADP transmembrane transport"/>
    <property type="evidence" value="ECO:0007669"/>
    <property type="project" value="InterPro"/>
</dbReference>
<dbReference type="GO" id="GO:1990544">
    <property type="term" value="P:mitochondrial ATP transmembrane transport"/>
    <property type="evidence" value="ECO:0007669"/>
    <property type="project" value="InterPro"/>
</dbReference>
<dbReference type="FunFam" id="1.50.40.10:FF:000002">
    <property type="entry name" value="Putative ADP/ATP translocase 2-like"/>
    <property type="match status" value="1"/>
</dbReference>
<dbReference type="Gene3D" id="1.50.40.10">
    <property type="entry name" value="Mitochondrial carrier domain"/>
    <property type="match status" value="1"/>
</dbReference>
<dbReference type="InterPro" id="IPR002113">
    <property type="entry name" value="ADT_euk_type"/>
</dbReference>
<dbReference type="InterPro" id="IPR002067">
    <property type="entry name" value="Mit_carrier"/>
</dbReference>
<dbReference type="InterPro" id="IPR018108">
    <property type="entry name" value="Mitochondrial_sb/sol_carrier"/>
</dbReference>
<dbReference type="InterPro" id="IPR023395">
    <property type="entry name" value="Mt_carrier_dom_sf"/>
</dbReference>
<dbReference type="PANTHER" id="PTHR45635">
    <property type="entry name" value="ADP,ATP CARRIER PROTEIN 1-RELATED-RELATED"/>
    <property type="match status" value="1"/>
</dbReference>
<dbReference type="PANTHER" id="PTHR45635:SF14">
    <property type="entry name" value="ADP_ATP TRANSLOCASE"/>
    <property type="match status" value="1"/>
</dbReference>
<dbReference type="Pfam" id="PF00153">
    <property type="entry name" value="Mito_carr"/>
    <property type="match status" value="3"/>
</dbReference>
<dbReference type="PRINTS" id="PR00927">
    <property type="entry name" value="ADPTRNSLCASE"/>
</dbReference>
<dbReference type="PRINTS" id="PR00926">
    <property type="entry name" value="MITOCARRIER"/>
</dbReference>
<dbReference type="SUPFAM" id="SSF103506">
    <property type="entry name" value="Mitochondrial carrier"/>
    <property type="match status" value="1"/>
</dbReference>
<dbReference type="PROSITE" id="PS50920">
    <property type="entry name" value="SOLCAR"/>
    <property type="match status" value="3"/>
</dbReference>
<feature type="chain" id="PRO_0000328690" description="Mitochondrial substrate carrier family protein ancA">
    <location>
        <begin position="1"/>
        <end position="309"/>
    </location>
</feature>
<feature type="transmembrane region" description="Helical; Name=1" evidence="2">
    <location>
        <begin position="12"/>
        <end position="41"/>
    </location>
</feature>
<feature type="transmembrane region" description="Helical; Name=2" evidence="2">
    <location>
        <begin position="79"/>
        <end position="103"/>
    </location>
</feature>
<feature type="transmembrane region" description="Helical; Name=3" evidence="2">
    <location>
        <begin position="113"/>
        <end position="133"/>
    </location>
</feature>
<feature type="transmembrane region" description="Helical; Name=4" evidence="2">
    <location>
        <begin position="181"/>
        <end position="201"/>
    </location>
</feature>
<feature type="transmembrane region" description="Helical; Name=5" evidence="2">
    <location>
        <begin position="215"/>
        <end position="235"/>
    </location>
</feature>
<feature type="transmembrane region" description="Helical; Name=6" evidence="2">
    <location>
        <begin position="276"/>
        <end position="293"/>
    </location>
</feature>
<feature type="repeat" description="Solcar 1">
    <location>
        <begin position="10"/>
        <end position="102"/>
    </location>
</feature>
<feature type="repeat" description="Solcar 2">
    <location>
        <begin position="114"/>
        <end position="203"/>
    </location>
</feature>
<feature type="repeat" description="Solcar 3">
    <location>
        <begin position="216"/>
        <end position="299"/>
    </location>
</feature>
<feature type="region of interest" description="Important for transport activity" evidence="3">
    <location>
        <begin position="239"/>
        <end position="244"/>
    </location>
</feature>
<feature type="short sequence motif" description="Nucleotide carrier signature motif" evidence="2">
    <location>
        <begin position="239"/>
        <end position="244"/>
    </location>
</feature>
<feature type="binding site" evidence="2">
    <location>
        <position position="84"/>
    </location>
    <ligand>
        <name>ADP</name>
        <dbReference type="ChEBI" id="CHEBI:456216"/>
    </ligand>
</feature>
<feature type="binding site" evidence="2">
    <location>
        <position position="96"/>
    </location>
    <ligand>
        <name>ADP</name>
        <dbReference type="ChEBI" id="CHEBI:456216"/>
    </ligand>
</feature>
<feature type="binding site" evidence="2">
    <location>
        <position position="239"/>
    </location>
    <ligand>
        <name>ADP</name>
        <dbReference type="ChEBI" id="CHEBI:456216"/>
    </ligand>
</feature>